<comment type="function">
    <text evidence="3">Putative taste receptor which may play a role in the perception of bitterness.</text>
</comment>
<comment type="subcellular location">
    <subcellularLocation>
        <location evidence="3">Membrane</location>
        <topology evidence="3">Multi-pass membrane protein</topology>
    </subcellularLocation>
</comment>
<comment type="miscellaneous">
    <text evidence="3">Several bitter taste receptors are expressed in a single taste receptor cell.</text>
</comment>
<comment type="similarity">
    <text evidence="2">Belongs to the G-protein coupled receptor T2R family.</text>
</comment>
<proteinExistence type="inferred from homology"/>
<feature type="chain" id="PRO_0000247658" description="Taste receptor type 2 member 39">
    <location>
        <begin position="1"/>
        <end position="319"/>
    </location>
</feature>
<feature type="topological domain" description="Extracellular" evidence="2">
    <location>
        <begin position="1"/>
        <end position="16"/>
    </location>
</feature>
<feature type="transmembrane region" description="Helical; Name=1" evidence="2">
    <location>
        <begin position="17"/>
        <end position="37"/>
    </location>
</feature>
<feature type="topological domain" description="Cytoplasmic" evidence="2">
    <location>
        <begin position="38"/>
        <end position="56"/>
    </location>
</feature>
<feature type="transmembrane region" description="Helical; Name=2" evidence="2">
    <location>
        <begin position="57"/>
        <end position="77"/>
    </location>
</feature>
<feature type="topological domain" description="Extracellular" evidence="2">
    <location>
        <begin position="78"/>
        <end position="97"/>
    </location>
</feature>
<feature type="transmembrane region" description="Helical; Name=3" evidence="2">
    <location>
        <begin position="98"/>
        <end position="118"/>
    </location>
</feature>
<feature type="topological domain" description="Cytoplasmic" evidence="2">
    <location>
        <begin position="119"/>
        <end position="137"/>
    </location>
</feature>
<feature type="transmembrane region" description="Helical; Name=4" evidence="2">
    <location>
        <begin position="138"/>
        <end position="158"/>
    </location>
</feature>
<feature type="topological domain" description="Extracellular" evidence="2">
    <location>
        <begin position="159"/>
        <end position="187"/>
    </location>
</feature>
<feature type="transmembrane region" description="Helical; Name=5" evidence="2">
    <location>
        <begin position="188"/>
        <end position="208"/>
    </location>
</feature>
<feature type="topological domain" description="Cytoplasmic" evidence="2">
    <location>
        <begin position="209"/>
        <end position="247"/>
    </location>
</feature>
<feature type="transmembrane region" description="Helical; Name=6" evidence="2">
    <location>
        <begin position="248"/>
        <end position="268"/>
    </location>
</feature>
<feature type="topological domain" description="Extracellular" evidence="2">
    <location>
        <begin position="269"/>
        <end position="273"/>
    </location>
</feature>
<feature type="transmembrane region" description="Helical; Name=7" evidence="2">
    <location>
        <begin position="274"/>
        <end position="294"/>
    </location>
</feature>
<feature type="topological domain" description="Cytoplasmic" evidence="2">
    <location>
        <begin position="295"/>
        <end position="319"/>
    </location>
</feature>
<feature type="glycosylation site" description="N-linked (GlcNAc...) asparagine" evidence="2">
    <location>
        <position position="82"/>
    </location>
</feature>
<feature type="glycosylation site" description="N-linked (GlcNAc...) asparagine" evidence="2">
    <location>
        <position position="167"/>
    </location>
</feature>
<feature type="glycosylation site" description="N-linked (GlcNAc...) asparagine" evidence="2">
    <location>
        <position position="176"/>
    </location>
</feature>
<accession>Q67ER9</accession>
<protein>
    <recommendedName>
        <fullName>Taste receptor type 2 member 39</fullName>
        <shortName>T2R39</shortName>
    </recommendedName>
    <alternativeName>
        <fullName evidence="5">Taste receptor type 2 member 139</fullName>
    </alternativeName>
    <alternativeName>
        <fullName>Taste receptor type 2 member 32</fullName>
        <shortName>T2R32</shortName>
    </alternativeName>
</protein>
<sequence>MAQPSNYWKQDLLPLSILILTLVATECTIGIIASGIITVVNAVSWVQKRAVSITTRILLLLSVSRIGLQSIILIEMTSSIFNFSSYNSVLYRVSRVSFVFLNYCSLWFAALLSFFHFVKIANFSYPLFFKLKWRISELMPWLLWLSVFISFSSSMFFCNHKYTVYNNISLSSNICNFTMELYVAEANVVNVAFLFSFGILPPLTMFIATATLLIFSLRRHTLHMRNGDADSRNPRVEAHKQAIKETSCFLFLYILYAAVLFLSTSNIADASLFWSSVLRISLPVYPAGHSVLLIQSNPGLKRTWKQLLSQIHLHLQSRY</sequence>
<organism>
    <name type="scientific">Rattus norvegicus</name>
    <name type="common">Rat</name>
    <dbReference type="NCBI Taxonomy" id="10116"/>
    <lineage>
        <taxon>Eukaryota</taxon>
        <taxon>Metazoa</taxon>
        <taxon>Chordata</taxon>
        <taxon>Craniata</taxon>
        <taxon>Vertebrata</taxon>
        <taxon>Euteleostomi</taxon>
        <taxon>Mammalia</taxon>
        <taxon>Eutheria</taxon>
        <taxon>Euarchontoglires</taxon>
        <taxon>Glires</taxon>
        <taxon>Rodentia</taxon>
        <taxon>Myomorpha</taxon>
        <taxon>Muroidea</taxon>
        <taxon>Muridae</taxon>
        <taxon>Murinae</taxon>
        <taxon>Rattus</taxon>
    </lineage>
</organism>
<evidence type="ECO:0000250" key="1">
    <source>
        <dbReference type="UniProtKB" id="Q7TQA5"/>
    </source>
</evidence>
<evidence type="ECO:0000255" key="2"/>
<evidence type="ECO:0000305" key="3"/>
<evidence type="ECO:0000312" key="4">
    <source>
        <dbReference type="EMBL" id="AAR13360.1"/>
    </source>
</evidence>
<evidence type="ECO:0000312" key="5">
    <source>
        <dbReference type="RGD" id="1595436"/>
    </source>
</evidence>
<gene>
    <name evidence="1" type="primary">Tas2r39</name>
    <name evidence="5" type="synonym">Tas2r139</name>
    <name type="synonym">Tas2r32</name>
</gene>
<reference evidence="4" key="1">
    <citation type="submission" date="2003-08" db="EMBL/GenBank/DDBJ databases">
        <title>Identification of new putative rat taste receptors belonging to the T2R family.</title>
        <authorList>
            <person name="Conte C."/>
            <person name="Ebeling M."/>
            <person name="Marcuz A."/>
            <person name="Andres-Barquin P.J."/>
        </authorList>
    </citation>
    <scope>NUCLEOTIDE SEQUENCE [GENOMIC DNA]</scope>
    <source>
        <strain evidence="4">Sprague-Dawley</strain>
    </source>
</reference>
<keyword id="KW-0297">G-protein coupled receptor</keyword>
<keyword id="KW-0325">Glycoprotein</keyword>
<keyword id="KW-0472">Membrane</keyword>
<keyword id="KW-0675">Receptor</keyword>
<keyword id="KW-1185">Reference proteome</keyword>
<keyword id="KW-0716">Sensory transduction</keyword>
<keyword id="KW-0919">Taste</keyword>
<keyword id="KW-0807">Transducer</keyword>
<keyword id="KW-0812">Transmembrane</keyword>
<keyword id="KW-1133">Transmembrane helix</keyword>
<name>T2R39_RAT</name>
<dbReference type="EMBL" id="AY362751">
    <property type="protein sequence ID" value="AAR13360.1"/>
    <property type="molecule type" value="Genomic_DNA"/>
</dbReference>
<dbReference type="RefSeq" id="NP_001074374.1">
    <property type="nucleotide sequence ID" value="NM_001080905.1"/>
</dbReference>
<dbReference type="SMR" id="Q67ER9"/>
<dbReference type="FunCoup" id="Q67ER9">
    <property type="interactions" value="87"/>
</dbReference>
<dbReference type="STRING" id="10116.ENSRNOP00000035471"/>
<dbReference type="GlyCosmos" id="Q67ER9">
    <property type="glycosylation" value="3 sites, No reported glycans"/>
</dbReference>
<dbReference type="GlyGen" id="Q67ER9">
    <property type="glycosylation" value="3 sites"/>
</dbReference>
<dbReference type="PhosphoSitePlus" id="Q67ER9"/>
<dbReference type="PaxDb" id="10116-ENSRNOP00000035471"/>
<dbReference type="Ensembl" id="ENSRNOT00000037220.2">
    <property type="protein sequence ID" value="ENSRNOP00000035471.1"/>
    <property type="gene ID" value="ENSRNOG00000028135.2"/>
</dbReference>
<dbReference type="GeneID" id="680188"/>
<dbReference type="KEGG" id="rno:680188"/>
<dbReference type="UCSC" id="RGD:1595436">
    <property type="organism name" value="rat"/>
</dbReference>
<dbReference type="AGR" id="RGD:1595436"/>
<dbReference type="CTD" id="353148"/>
<dbReference type="RGD" id="1595436">
    <property type="gene designation" value="Tas2r139"/>
</dbReference>
<dbReference type="eggNOG" id="ENOG502SQHF">
    <property type="taxonomic scope" value="Eukaryota"/>
</dbReference>
<dbReference type="GeneTree" id="ENSGT01100000263477"/>
<dbReference type="HOGENOM" id="CLU_072337_3_0_1"/>
<dbReference type="InParanoid" id="Q67ER9"/>
<dbReference type="OMA" id="LYMSNIF"/>
<dbReference type="OrthoDB" id="8876749at2759"/>
<dbReference type="PhylomeDB" id="Q67ER9"/>
<dbReference type="TreeFam" id="TF335891"/>
<dbReference type="Reactome" id="R-RNO-418594">
    <property type="pathway name" value="G alpha (i) signalling events"/>
</dbReference>
<dbReference type="Reactome" id="R-RNO-420499">
    <property type="pathway name" value="Class C/3 (Metabotropic glutamate/pheromone receptors)"/>
</dbReference>
<dbReference type="Reactome" id="R-RNO-9717207">
    <property type="pathway name" value="Sensory perception of sweet, bitter, and umami (glutamate) taste"/>
</dbReference>
<dbReference type="PRO" id="PR:Q67ER9"/>
<dbReference type="Proteomes" id="UP000002494">
    <property type="component" value="Chromosome 4"/>
</dbReference>
<dbReference type="GO" id="GO:0016020">
    <property type="term" value="C:membrane"/>
    <property type="evidence" value="ECO:0000318"/>
    <property type="project" value="GO_Central"/>
</dbReference>
<dbReference type="GO" id="GO:0033038">
    <property type="term" value="F:bitter taste receptor activity"/>
    <property type="evidence" value="ECO:0000266"/>
    <property type="project" value="RGD"/>
</dbReference>
<dbReference type="GO" id="GO:0004930">
    <property type="term" value="F:G protein-coupled receptor activity"/>
    <property type="evidence" value="ECO:0007669"/>
    <property type="project" value="UniProtKB-KW"/>
</dbReference>
<dbReference type="GO" id="GO:0001580">
    <property type="term" value="P:detection of chemical stimulus involved in sensory perception of bitter taste"/>
    <property type="evidence" value="ECO:0000266"/>
    <property type="project" value="RGD"/>
</dbReference>
<dbReference type="CDD" id="cd15015">
    <property type="entry name" value="7tm_TAS2R39"/>
    <property type="match status" value="1"/>
</dbReference>
<dbReference type="FunFam" id="1.20.1070.10:FF:000055">
    <property type="entry name" value="Taste receptor type 2"/>
    <property type="match status" value="1"/>
</dbReference>
<dbReference type="Gene3D" id="1.20.1070.10">
    <property type="entry name" value="Rhodopsin 7-helix transmembrane proteins"/>
    <property type="match status" value="1"/>
</dbReference>
<dbReference type="InterPro" id="IPR017452">
    <property type="entry name" value="GPCR_Rhodpsn_7TM"/>
</dbReference>
<dbReference type="InterPro" id="IPR007960">
    <property type="entry name" value="TAS2R"/>
</dbReference>
<dbReference type="PANTHER" id="PTHR11394">
    <property type="entry name" value="TASTE RECEPTOR TYPE 2"/>
    <property type="match status" value="1"/>
</dbReference>
<dbReference type="PANTHER" id="PTHR11394:SF142">
    <property type="entry name" value="TASTE RECEPTOR TYPE 2 MEMBER 39"/>
    <property type="match status" value="1"/>
</dbReference>
<dbReference type="Pfam" id="PF05296">
    <property type="entry name" value="TAS2R"/>
    <property type="match status" value="1"/>
</dbReference>
<dbReference type="SUPFAM" id="SSF81321">
    <property type="entry name" value="Family A G protein-coupled receptor-like"/>
    <property type="match status" value="1"/>
</dbReference>
<dbReference type="PROSITE" id="PS50262">
    <property type="entry name" value="G_PROTEIN_RECEP_F1_2"/>
    <property type="match status" value="1"/>
</dbReference>